<comment type="function">
    <text evidence="1">Catalyzes the irreversible cleavage of the glycosidic bond in both 5'-methylthioadenosine (MTA) and S-adenosylhomocysteine (SAH/AdoHcy) to adenine and the corresponding thioribose, 5'-methylthioribose and S-ribosylhomocysteine, respectively. Also cleaves 5'-deoxyadenosine, a toxic by-product of radical S-adenosylmethionine (SAM) enzymes, into 5-deoxyribose and adenine.</text>
</comment>
<comment type="catalytic activity">
    <reaction evidence="1">
        <text>S-adenosyl-L-homocysteine + H2O = S-(5-deoxy-D-ribos-5-yl)-L-homocysteine + adenine</text>
        <dbReference type="Rhea" id="RHEA:17805"/>
        <dbReference type="ChEBI" id="CHEBI:15377"/>
        <dbReference type="ChEBI" id="CHEBI:16708"/>
        <dbReference type="ChEBI" id="CHEBI:57856"/>
        <dbReference type="ChEBI" id="CHEBI:58195"/>
        <dbReference type="EC" id="3.2.2.9"/>
    </reaction>
</comment>
<comment type="catalytic activity">
    <reaction evidence="1">
        <text>S-methyl-5'-thioadenosine + H2O = 5-(methylsulfanyl)-D-ribose + adenine</text>
        <dbReference type="Rhea" id="RHEA:13617"/>
        <dbReference type="ChEBI" id="CHEBI:15377"/>
        <dbReference type="ChEBI" id="CHEBI:16708"/>
        <dbReference type="ChEBI" id="CHEBI:17509"/>
        <dbReference type="ChEBI" id="CHEBI:78440"/>
        <dbReference type="EC" id="3.2.2.9"/>
    </reaction>
</comment>
<comment type="catalytic activity">
    <reaction evidence="1">
        <text>5'-deoxyadenosine + H2O = 5-deoxy-D-ribose + adenine</text>
        <dbReference type="Rhea" id="RHEA:29859"/>
        <dbReference type="ChEBI" id="CHEBI:15377"/>
        <dbReference type="ChEBI" id="CHEBI:16708"/>
        <dbReference type="ChEBI" id="CHEBI:17319"/>
        <dbReference type="ChEBI" id="CHEBI:149540"/>
        <dbReference type="EC" id="3.2.2.9"/>
    </reaction>
    <physiologicalReaction direction="left-to-right" evidence="1">
        <dbReference type="Rhea" id="RHEA:29860"/>
    </physiologicalReaction>
</comment>
<comment type="pathway">
    <text evidence="1">Amino-acid biosynthesis; L-methionine biosynthesis via salvage pathway; S-methyl-5-thio-alpha-D-ribose 1-phosphate from S-methyl-5'-thioadenosine (hydrolase route): step 1/2.</text>
</comment>
<comment type="similarity">
    <text evidence="1">Belongs to the PNP/UDP phosphorylase family. MtnN subfamily.</text>
</comment>
<organism>
    <name type="scientific">Listeria innocua serovar 6a (strain ATCC BAA-680 / CLIP 11262)</name>
    <dbReference type="NCBI Taxonomy" id="272626"/>
    <lineage>
        <taxon>Bacteria</taxon>
        <taxon>Bacillati</taxon>
        <taxon>Bacillota</taxon>
        <taxon>Bacilli</taxon>
        <taxon>Bacillales</taxon>
        <taxon>Listeriaceae</taxon>
        <taxon>Listeria</taxon>
    </lineage>
</organism>
<name>MTNN_LISIN</name>
<reference key="1">
    <citation type="journal article" date="2001" name="Science">
        <title>Comparative genomics of Listeria species.</title>
        <authorList>
            <person name="Glaser P."/>
            <person name="Frangeul L."/>
            <person name="Buchrieser C."/>
            <person name="Rusniok C."/>
            <person name="Amend A."/>
            <person name="Baquero F."/>
            <person name="Berche P."/>
            <person name="Bloecker H."/>
            <person name="Brandt P."/>
            <person name="Chakraborty T."/>
            <person name="Charbit A."/>
            <person name="Chetouani F."/>
            <person name="Couve E."/>
            <person name="de Daruvar A."/>
            <person name="Dehoux P."/>
            <person name="Domann E."/>
            <person name="Dominguez-Bernal G."/>
            <person name="Duchaud E."/>
            <person name="Durant L."/>
            <person name="Dussurget O."/>
            <person name="Entian K.-D."/>
            <person name="Fsihi H."/>
            <person name="Garcia-del Portillo F."/>
            <person name="Garrido P."/>
            <person name="Gautier L."/>
            <person name="Goebel W."/>
            <person name="Gomez-Lopez N."/>
            <person name="Hain T."/>
            <person name="Hauf J."/>
            <person name="Jackson D."/>
            <person name="Jones L.-M."/>
            <person name="Kaerst U."/>
            <person name="Kreft J."/>
            <person name="Kuhn M."/>
            <person name="Kunst F."/>
            <person name="Kurapkat G."/>
            <person name="Madueno E."/>
            <person name="Maitournam A."/>
            <person name="Mata Vicente J."/>
            <person name="Ng E."/>
            <person name="Nedjari H."/>
            <person name="Nordsiek G."/>
            <person name="Novella S."/>
            <person name="de Pablos B."/>
            <person name="Perez-Diaz J.-C."/>
            <person name="Purcell R."/>
            <person name="Remmel B."/>
            <person name="Rose M."/>
            <person name="Schlueter T."/>
            <person name="Simoes N."/>
            <person name="Tierrez A."/>
            <person name="Vazquez-Boland J.-A."/>
            <person name="Voss H."/>
            <person name="Wehland J."/>
            <person name="Cossart P."/>
        </authorList>
    </citation>
    <scope>NUCLEOTIDE SEQUENCE [LARGE SCALE GENOMIC DNA]</scope>
    <source>
        <strain>ATCC BAA-680 / CLIP 11262</strain>
    </source>
</reference>
<evidence type="ECO:0000255" key="1">
    <source>
        <dbReference type="HAMAP-Rule" id="MF_01684"/>
    </source>
</evidence>
<gene>
    <name evidence="1" type="primary">mtnN</name>
    <name type="ordered locus">lin1529</name>
</gene>
<accession>Q92BL9</accession>
<dbReference type="EC" id="3.2.2.9" evidence="1"/>
<dbReference type="EMBL" id="AL596168">
    <property type="protein sequence ID" value="CAC96760.1"/>
    <property type="molecule type" value="Genomic_DNA"/>
</dbReference>
<dbReference type="PIR" id="AH1623">
    <property type="entry name" value="AH1623"/>
</dbReference>
<dbReference type="RefSeq" id="WP_010991580.1">
    <property type="nucleotide sequence ID" value="NC_003212.1"/>
</dbReference>
<dbReference type="SMR" id="Q92BL9"/>
<dbReference type="STRING" id="272626.gene:17565860"/>
<dbReference type="KEGG" id="lin:lin1529"/>
<dbReference type="eggNOG" id="COG0775">
    <property type="taxonomic scope" value="Bacteria"/>
</dbReference>
<dbReference type="HOGENOM" id="CLU_031248_2_2_9"/>
<dbReference type="OrthoDB" id="9792278at2"/>
<dbReference type="UniPathway" id="UPA00904">
    <property type="reaction ID" value="UER00871"/>
</dbReference>
<dbReference type="Proteomes" id="UP000002513">
    <property type="component" value="Chromosome"/>
</dbReference>
<dbReference type="GO" id="GO:0005829">
    <property type="term" value="C:cytosol"/>
    <property type="evidence" value="ECO:0007669"/>
    <property type="project" value="TreeGrafter"/>
</dbReference>
<dbReference type="GO" id="GO:0008782">
    <property type="term" value="F:adenosylhomocysteine nucleosidase activity"/>
    <property type="evidence" value="ECO:0007669"/>
    <property type="project" value="UniProtKB-UniRule"/>
</dbReference>
<dbReference type="GO" id="GO:0008930">
    <property type="term" value="F:methylthioadenosine nucleosidase activity"/>
    <property type="evidence" value="ECO:0007669"/>
    <property type="project" value="UniProtKB-UniRule"/>
</dbReference>
<dbReference type="GO" id="GO:0019509">
    <property type="term" value="P:L-methionine salvage from methylthioadenosine"/>
    <property type="evidence" value="ECO:0007669"/>
    <property type="project" value="UniProtKB-UniRule"/>
</dbReference>
<dbReference type="GO" id="GO:0019284">
    <property type="term" value="P:L-methionine salvage from S-adenosylmethionine"/>
    <property type="evidence" value="ECO:0007669"/>
    <property type="project" value="TreeGrafter"/>
</dbReference>
<dbReference type="GO" id="GO:0009164">
    <property type="term" value="P:nucleoside catabolic process"/>
    <property type="evidence" value="ECO:0007669"/>
    <property type="project" value="InterPro"/>
</dbReference>
<dbReference type="CDD" id="cd09008">
    <property type="entry name" value="MTAN"/>
    <property type="match status" value="1"/>
</dbReference>
<dbReference type="FunFam" id="3.40.50.1580:FF:000001">
    <property type="entry name" value="MTA/SAH nucleosidase family protein"/>
    <property type="match status" value="1"/>
</dbReference>
<dbReference type="Gene3D" id="3.40.50.1580">
    <property type="entry name" value="Nucleoside phosphorylase domain"/>
    <property type="match status" value="1"/>
</dbReference>
<dbReference type="HAMAP" id="MF_01684">
    <property type="entry name" value="Salvage_MtnN"/>
    <property type="match status" value="1"/>
</dbReference>
<dbReference type="InterPro" id="IPR010049">
    <property type="entry name" value="MTA_SAH_Nsdase"/>
</dbReference>
<dbReference type="InterPro" id="IPR000845">
    <property type="entry name" value="Nucleoside_phosphorylase_d"/>
</dbReference>
<dbReference type="InterPro" id="IPR035994">
    <property type="entry name" value="Nucleoside_phosphorylase_sf"/>
</dbReference>
<dbReference type="NCBIfam" id="TIGR01704">
    <property type="entry name" value="MTA_SAH-Nsdase"/>
    <property type="match status" value="1"/>
</dbReference>
<dbReference type="NCBIfam" id="NF004079">
    <property type="entry name" value="PRK05584.1"/>
    <property type="match status" value="1"/>
</dbReference>
<dbReference type="PANTHER" id="PTHR46832">
    <property type="entry name" value="5'-METHYLTHIOADENOSINE/S-ADENOSYLHOMOCYSTEINE NUCLEOSIDASE"/>
    <property type="match status" value="1"/>
</dbReference>
<dbReference type="PANTHER" id="PTHR46832:SF1">
    <property type="entry name" value="5'-METHYLTHIOADENOSINE_S-ADENOSYLHOMOCYSTEINE NUCLEOSIDASE"/>
    <property type="match status" value="1"/>
</dbReference>
<dbReference type="Pfam" id="PF01048">
    <property type="entry name" value="PNP_UDP_1"/>
    <property type="match status" value="1"/>
</dbReference>
<dbReference type="SUPFAM" id="SSF53167">
    <property type="entry name" value="Purine and uridine phosphorylases"/>
    <property type="match status" value="1"/>
</dbReference>
<keyword id="KW-0028">Amino-acid biosynthesis</keyword>
<keyword id="KW-0378">Hydrolase</keyword>
<keyword id="KW-0486">Methionine biosynthesis</keyword>
<feature type="chain" id="PRO_0000359312" description="5'-methylthioadenosine/S-adenosylhomocysteine nucleosidase">
    <location>
        <begin position="1"/>
        <end position="233"/>
    </location>
</feature>
<feature type="active site" description="Proton acceptor" evidence="1">
    <location>
        <position position="12"/>
    </location>
</feature>
<feature type="active site" description="Proton donor" evidence="1">
    <location>
        <position position="201"/>
    </location>
</feature>
<feature type="binding site" evidence="1">
    <location>
        <position position="78"/>
    </location>
    <ligand>
        <name>substrate</name>
    </ligand>
</feature>
<feature type="binding site" evidence="1">
    <location>
        <position position="156"/>
    </location>
    <ligand>
        <name>substrate</name>
    </ligand>
</feature>
<feature type="binding site" evidence="1">
    <location>
        <begin position="177"/>
        <end position="178"/>
    </location>
    <ligand>
        <name>substrate</name>
    </ligand>
</feature>
<protein>
    <recommendedName>
        <fullName evidence="1">5'-methylthioadenosine/S-adenosylhomocysteine nucleosidase</fullName>
        <shortName evidence="1">MTA/SAH nucleosidase</shortName>
        <shortName evidence="1">MTAN</shortName>
        <ecNumber evidence="1">3.2.2.9</ecNumber>
    </recommendedName>
    <alternativeName>
        <fullName evidence="1">5'-deoxyadenosine nucleosidase</fullName>
        <shortName evidence="1">DOA nucleosidase</shortName>
        <shortName evidence="1">dAdo nucleosidase</shortName>
    </alternativeName>
    <alternativeName>
        <fullName evidence="1">5'-methylthioadenosine nucleosidase</fullName>
        <shortName evidence="1">MTA nucleosidase</shortName>
    </alternativeName>
    <alternativeName>
        <fullName evidence="1">S-adenosylhomocysteine nucleosidase</fullName>
        <shortName evidence="1">AdoHcy nucleosidase</shortName>
        <shortName evidence="1">SAH nucleosidase</shortName>
        <shortName evidence="1">SRH nucleosidase</shortName>
    </alternativeName>
</protein>
<proteinExistence type="inferred from homology"/>
<sequence length="233" mass="25411">MTIGIIGAMEEEVELLKNTMPSIEEVIIGGAKFYIGEIAGKEVVLLESGIGKVNAALGTTLLADRFKPEIIINTGSAGGIGEGLAIGDVIISDRLAYGDVDVTEFGYTYGQVPRMPAFYQGDAVLLKKAETIYRDYFADSENKAVYGLVITNDSFIMRPDQHEIIRTFFPDVKAVEMEAAAIAQVAYQFDIPFLIIRAISDLANQEATMSFDEFIHLAAKQSAICIIELLKTI</sequence>